<comment type="function">
    <text evidence="1">Catalyzes the condensation of pantoate with beta-alanine in an ATP-dependent reaction via a pantoyl-adenylate intermediate.</text>
</comment>
<comment type="catalytic activity">
    <reaction evidence="1">
        <text>(R)-pantoate + beta-alanine + ATP = (R)-pantothenate + AMP + diphosphate + H(+)</text>
        <dbReference type="Rhea" id="RHEA:10912"/>
        <dbReference type="ChEBI" id="CHEBI:15378"/>
        <dbReference type="ChEBI" id="CHEBI:15980"/>
        <dbReference type="ChEBI" id="CHEBI:29032"/>
        <dbReference type="ChEBI" id="CHEBI:30616"/>
        <dbReference type="ChEBI" id="CHEBI:33019"/>
        <dbReference type="ChEBI" id="CHEBI:57966"/>
        <dbReference type="ChEBI" id="CHEBI:456215"/>
        <dbReference type="EC" id="6.3.2.1"/>
    </reaction>
</comment>
<comment type="pathway">
    <text evidence="1">Cofactor biosynthesis; (R)-pantothenate biosynthesis; (R)-pantothenate from (R)-pantoate and beta-alanine: step 1/1.</text>
</comment>
<comment type="subunit">
    <text evidence="1">Homodimer.</text>
</comment>
<comment type="subcellular location">
    <subcellularLocation>
        <location evidence="1">Cytoplasm</location>
    </subcellularLocation>
</comment>
<comment type="miscellaneous">
    <text evidence="1">The reaction proceeds by a bi uni uni bi ping pong mechanism.</text>
</comment>
<comment type="similarity">
    <text evidence="1">Belongs to the pantothenate synthetase family.</text>
</comment>
<protein>
    <recommendedName>
        <fullName evidence="1">Pantothenate synthetase</fullName>
        <shortName evidence="1">PS</shortName>
        <ecNumber evidence="1">6.3.2.1</ecNumber>
    </recommendedName>
    <alternativeName>
        <fullName evidence="1">Pantoate--beta-alanine ligase</fullName>
    </alternativeName>
    <alternativeName>
        <fullName evidence="1">Pantoate-activating enzyme</fullName>
    </alternativeName>
</protein>
<keyword id="KW-0067">ATP-binding</keyword>
<keyword id="KW-0963">Cytoplasm</keyword>
<keyword id="KW-0436">Ligase</keyword>
<keyword id="KW-0547">Nucleotide-binding</keyword>
<keyword id="KW-0566">Pantothenate biosynthesis</keyword>
<keyword id="KW-1185">Reference proteome</keyword>
<proteinExistence type="inferred from homology"/>
<feature type="chain" id="PRO_0000128227" description="Pantothenate synthetase">
    <location>
        <begin position="1"/>
        <end position="282"/>
    </location>
</feature>
<feature type="active site" description="Proton donor" evidence="1">
    <location>
        <position position="37"/>
    </location>
</feature>
<feature type="binding site" evidence="1">
    <location>
        <begin position="30"/>
        <end position="37"/>
    </location>
    <ligand>
        <name>ATP</name>
        <dbReference type="ChEBI" id="CHEBI:30616"/>
    </ligand>
</feature>
<feature type="binding site" evidence="1">
    <location>
        <position position="61"/>
    </location>
    <ligand>
        <name>(R)-pantoate</name>
        <dbReference type="ChEBI" id="CHEBI:15980"/>
    </ligand>
</feature>
<feature type="binding site" evidence="1">
    <location>
        <position position="61"/>
    </location>
    <ligand>
        <name>beta-alanine</name>
        <dbReference type="ChEBI" id="CHEBI:57966"/>
    </ligand>
</feature>
<feature type="binding site" evidence="1">
    <location>
        <begin position="147"/>
        <end position="150"/>
    </location>
    <ligand>
        <name>ATP</name>
        <dbReference type="ChEBI" id="CHEBI:30616"/>
    </ligand>
</feature>
<feature type="binding site" evidence="1">
    <location>
        <position position="153"/>
    </location>
    <ligand>
        <name>(R)-pantoate</name>
        <dbReference type="ChEBI" id="CHEBI:15980"/>
    </ligand>
</feature>
<feature type="binding site" evidence="1">
    <location>
        <position position="176"/>
    </location>
    <ligand>
        <name>ATP</name>
        <dbReference type="ChEBI" id="CHEBI:30616"/>
    </ligand>
</feature>
<feature type="binding site" evidence="1">
    <location>
        <begin position="184"/>
        <end position="187"/>
    </location>
    <ligand>
        <name>ATP</name>
        <dbReference type="ChEBI" id="CHEBI:30616"/>
    </ligand>
</feature>
<reference key="1">
    <citation type="journal article" date="2003" name="Science">
        <title>Role of mobile DNA in the evolution of vancomycin-resistant Enterococcus faecalis.</title>
        <authorList>
            <person name="Paulsen I.T."/>
            <person name="Banerjei L."/>
            <person name="Myers G.S.A."/>
            <person name="Nelson K.E."/>
            <person name="Seshadri R."/>
            <person name="Read T.D."/>
            <person name="Fouts D.E."/>
            <person name="Eisen J.A."/>
            <person name="Gill S.R."/>
            <person name="Heidelberg J.F."/>
            <person name="Tettelin H."/>
            <person name="Dodson R.J."/>
            <person name="Umayam L.A."/>
            <person name="Brinkac L.M."/>
            <person name="Beanan M.J."/>
            <person name="Daugherty S.C."/>
            <person name="DeBoy R.T."/>
            <person name="Durkin S.A."/>
            <person name="Kolonay J.F."/>
            <person name="Madupu R."/>
            <person name="Nelson W.C."/>
            <person name="Vamathevan J.J."/>
            <person name="Tran B."/>
            <person name="Upton J."/>
            <person name="Hansen T."/>
            <person name="Shetty J."/>
            <person name="Khouri H.M."/>
            <person name="Utterback T.R."/>
            <person name="Radune D."/>
            <person name="Ketchum K.A."/>
            <person name="Dougherty B.A."/>
            <person name="Fraser C.M."/>
        </authorList>
    </citation>
    <scope>NUCLEOTIDE SEQUENCE [LARGE SCALE GENOMIC DNA]</scope>
    <source>
        <strain>ATCC 700802 / V583</strain>
    </source>
</reference>
<evidence type="ECO:0000255" key="1">
    <source>
        <dbReference type="HAMAP-Rule" id="MF_00158"/>
    </source>
</evidence>
<name>PANC_ENTFA</name>
<gene>
    <name evidence="1" type="primary">panC</name>
    <name type="ordered locus">EF_1859</name>
</gene>
<accession>Q833S6</accession>
<sequence>MVIFKTVNDVRSQVKEWKKQGLKVGLVPTMGYLHEGHESLIRKASKENDKVVVSIFVNPTQFGKNEDLGSYPRDLERDIEVCTRGRATAIFNPEVEEMYCDNASTFVNITGLTEGLCGASRPIHFRGVCTVVSKLFNIIPADRAYFGEKDAQQLAVIKRMVRDLNIDIDVVGCPIIREEDGLAKSSRNTYLSLEERSSATILNKSLTLAKEALNNGERDSLKIIEIISKNINTCNLAKIDYVEVVDSLSLQRVNYIEKSVLVAIAVFIGKTRLIDNFTFELQ</sequence>
<organism>
    <name type="scientific">Enterococcus faecalis (strain ATCC 700802 / V583)</name>
    <dbReference type="NCBI Taxonomy" id="226185"/>
    <lineage>
        <taxon>Bacteria</taxon>
        <taxon>Bacillati</taxon>
        <taxon>Bacillota</taxon>
        <taxon>Bacilli</taxon>
        <taxon>Lactobacillales</taxon>
        <taxon>Enterococcaceae</taxon>
        <taxon>Enterococcus</taxon>
    </lineage>
</organism>
<dbReference type="EC" id="6.3.2.1" evidence="1"/>
<dbReference type="EMBL" id="AE016830">
    <property type="protein sequence ID" value="AAO81617.1"/>
    <property type="molecule type" value="Genomic_DNA"/>
</dbReference>
<dbReference type="RefSeq" id="NP_815547.1">
    <property type="nucleotide sequence ID" value="NC_004668.1"/>
</dbReference>
<dbReference type="RefSeq" id="WP_002369228.1">
    <property type="nucleotide sequence ID" value="NZ_KE136528.1"/>
</dbReference>
<dbReference type="SMR" id="Q833S6"/>
<dbReference type="STRING" id="226185.EF_1859"/>
<dbReference type="EnsemblBacteria" id="AAO81617">
    <property type="protein sequence ID" value="AAO81617"/>
    <property type="gene ID" value="EF_1859"/>
</dbReference>
<dbReference type="KEGG" id="efa:EF1859"/>
<dbReference type="PATRIC" id="fig|226185.45.peg.1659"/>
<dbReference type="eggNOG" id="COG0414">
    <property type="taxonomic scope" value="Bacteria"/>
</dbReference>
<dbReference type="HOGENOM" id="CLU_047148_0_0_9"/>
<dbReference type="UniPathway" id="UPA00028">
    <property type="reaction ID" value="UER00005"/>
</dbReference>
<dbReference type="Proteomes" id="UP000001415">
    <property type="component" value="Chromosome"/>
</dbReference>
<dbReference type="GO" id="GO:0005829">
    <property type="term" value="C:cytosol"/>
    <property type="evidence" value="ECO:0007669"/>
    <property type="project" value="TreeGrafter"/>
</dbReference>
<dbReference type="GO" id="GO:0005524">
    <property type="term" value="F:ATP binding"/>
    <property type="evidence" value="ECO:0007669"/>
    <property type="project" value="UniProtKB-KW"/>
</dbReference>
<dbReference type="GO" id="GO:0004592">
    <property type="term" value="F:pantoate-beta-alanine ligase activity"/>
    <property type="evidence" value="ECO:0007669"/>
    <property type="project" value="UniProtKB-UniRule"/>
</dbReference>
<dbReference type="GO" id="GO:0015940">
    <property type="term" value="P:pantothenate biosynthetic process"/>
    <property type="evidence" value="ECO:0007669"/>
    <property type="project" value="UniProtKB-UniRule"/>
</dbReference>
<dbReference type="CDD" id="cd00560">
    <property type="entry name" value="PanC"/>
    <property type="match status" value="1"/>
</dbReference>
<dbReference type="FunFam" id="3.30.1300.10:FF:000001">
    <property type="entry name" value="Pantothenate synthetase"/>
    <property type="match status" value="1"/>
</dbReference>
<dbReference type="FunFam" id="3.40.50.620:FF:000013">
    <property type="entry name" value="Pantothenate synthetase"/>
    <property type="match status" value="1"/>
</dbReference>
<dbReference type="Gene3D" id="3.40.50.620">
    <property type="entry name" value="HUPs"/>
    <property type="match status" value="1"/>
</dbReference>
<dbReference type="Gene3D" id="3.30.1300.10">
    <property type="entry name" value="Pantoate-beta-alanine ligase, C-terminal domain"/>
    <property type="match status" value="1"/>
</dbReference>
<dbReference type="HAMAP" id="MF_00158">
    <property type="entry name" value="PanC"/>
    <property type="match status" value="1"/>
</dbReference>
<dbReference type="InterPro" id="IPR004821">
    <property type="entry name" value="Cyt_trans-like"/>
</dbReference>
<dbReference type="InterPro" id="IPR003721">
    <property type="entry name" value="Pantoate_ligase"/>
</dbReference>
<dbReference type="InterPro" id="IPR042176">
    <property type="entry name" value="Pantoate_ligase_C"/>
</dbReference>
<dbReference type="InterPro" id="IPR014729">
    <property type="entry name" value="Rossmann-like_a/b/a_fold"/>
</dbReference>
<dbReference type="NCBIfam" id="TIGR00125">
    <property type="entry name" value="cyt_tran_rel"/>
    <property type="match status" value="1"/>
</dbReference>
<dbReference type="NCBIfam" id="TIGR00018">
    <property type="entry name" value="panC"/>
    <property type="match status" value="1"/>
</dbReference>
<dbReference type="PANTHER" id="PTHR21299">
    <property type="entry name" value="CYTIDYLATE KINASE/PANTOATE-BETA-ALANINE LIGASE"/>
    <property type="match status" value="1"/>
</dbReference>
<dbReference type="PANTHER" id="PTHR21299:SF1">
    <property type="entry name" value="PANTOATE--BETA-ALANINE LIGASE"/>
    <property type="match status" value="1"/>
</dbReference>
<dbReference type="Pfam" id="PF02569">
    <property type="entry name" value="Pantoate_ligase"/>
    <property type="match status" value="1"/>
</dbReference>
<dbReference type="SUPFAM" id="SSF52374">
    <property type="entry name" value="Nucleotidylyl transferase"/>
    <property type="match status" value="1"/>
</dbReference>